<protein>
    <recommendedName>
        <fullName evidence="1">3-isopropylmalate dehydratase small subunit</fullName>
        <ecNumber evidence="1">4.2.1.33</ecNumber>
    </recommendedName>
    <alternativeName>
        <fullName evidence="1">Alpha-IPM isomerase</fullName>
        <shortName evidence="1">IPMI</shortName>
    </alternativeName>
    <alternativeName>
        <fullName evidence="1">Isopropylmalate isomerase</fullName>
    </alternativeName>
</protein>
<evidence type="ECO:0000255" key="1">
    <source>
        <dbReference type="HAMAP-Rule" id="MF_01031"/>
    </source>
</evidence>
<gene>
    <name evidence="1" type="primary">leuD</name>
    <name type="ordered locus">YPDSF_3109</name>
</gene>
<sequence length="200" mass="22471">MAKFIQHIGLVAPLDAANVDTDAIIPKQFLQKVTRTGFGQHLFNDWRFLDDAGKVPNPDFVLNLPRYQGATILLARENFGCGSSREHAPWALTDFGFKVVIAPSFADIFYGNAFNNQLLPVTLSEADIDTLFQLVKENEGIEFVVDLEQQTVNAGGKSYAFEIDPFRRHCMINGLDSIGLTLQHEHNISAYEKQQPEFLR</sequence>
<organism>
    <name type="scientific">Yersinia pestis (strain Pestoides F)</name>
    <dbReference type="NCBI Taxonomy" id="386656"/>
    <lineage>
        <taxon>Bacteria</taxon>
        <taxon>Pseudomonadati</taxon>
        <taxon>Pseudomonadota</taxon>
        <taxon>Gammaproteobacteria</taxon>
        <taxon>Enterobacterales</taxon>
        <taxon>Yersiniaceae</taxon>
        <taxon>Yersinia</taxon>
    </lineage>
</organism>
<keyword id="KW-0028">Amino-acid biosynthesis</keyword>
<keyword id="KW-0100">Branched-chain amino acid biosynthesis</keyword>
<keyword id="KW-0432">Leucine biosynthesis</keyword>
<keyword id="KW-0456">Lyase</keyword>
<dbReference type="EC" id="4.2.1.33" evidence="1"/>
<dbReference type="EMBL" id="CP000668">
    <property type="protein sequence ID" value="ABP41467.1"/>
    <property type="molecule type" value="Genomic_DNA"/>
</dbReference>
<dbReference type="RefSeq" id="WP_002210456.1">
    <property type="nucleotide sequence ID" value="NZ_CP009715.1"/>
</dbReference>
<dbReference type="SMR" id="A4TQA5"/>
<dbReference type="GeneID" id="57974082"/>
<dbReference type="KEGG" id="ypp:YPDSF_3109"/>
<dbReference type="PATRIC" id="fig|386656.14.peg.1249"/>
<dbReference type="UniPathway" id="UPA00048">
    <property type="reaction ID" value="UER00071"/>
</dbReference>
<dbReference type="GO" id="GO:0009316">
    <property type="term" value="C:3-isopropylmalate dehydratase complex"/>
    <property type="evidence" value="ECO:0007669"/>
    <property type="project" value="InterPro"/>
</dbReference>
<dbReference type="GO" id="GO:0003861">
    <property type="term" value="F:3-isopropylmalate dehydratase activity"/>
    <property type="evidence" value="ECO:0007669"/>
    <property type="project" value="UniProtKB-UniRule"/>
</dbReference>
<dbReference type="GO" id="GO:0009098">
    <property type="term" value="P:L-leucine biosynthetic process"/>
    <property type="evidence" value="ECO:0007669"/>
    <property type="project" value="UniProtKB-UniRule"/>
</dbReference>
<dbReference type="CDD" id="cd01577">
    <property type="entry name" value="IPMI_Swivel"/>
    <property type="match status" value="1"/>
</dbReference>
<dbReference type="FunFam" id="3.20.19.10:FF:000003">
    <property type="entry name" value="3-isopropylmalate dehydratase small subunit"/>
    <property type="match status" value="1"/>
</dbReference>
<dbReference type="Gene3D" id="3.20.19.10">
    <property type="entry name" value="Aconitase, domain 4"/>
    <property type="match status" value="1"/>
</dbReference>
<dbReference type="HAMAP" id="MF_01031">
    <property type="entry name" value="LeuD_type1"/>
    <property type="match status" value="1"/>
</dbReference>
<dbReference type="InterPro" id="IPR004431">
    <property type="entry name" value="3-IsopropMal_deHydase_ssu"/>
</dbReference>
<dbReference type="InterPro" id="IPR015928">
    <property type="entry name" value="Aconitase/3IPM_dehydase_swvl"/>
</dbReference>
<dbReference type="InterPro" id="IPR000573">
    <property type="entry name" value="AconitaseA/IPMdHydase_ssu_swvl"/>
</dbReference>
<dbReference type="InterPro" id="IPR033940">
    <property type="entry name" value="IPMI_Swivel"/>
</dbReference>
<dbReference type="InterPro" id="IPR050075">
    <property type="entry name" value="LeuD"/>
</dbReference>
<dbReference type="NCBIfam" id="TIGR00171">
    <property type="entry name" value="leuD"/>
    <property type="match status" value="1"/>
</dbReference>
<dbReference type="NCBIfam" id="NF002458">
    <property type="entry name" value="PRK01641.1"/>
    <property type="match status" value="1"/>
</dbReference>
<dbReference type="PANTHER" id="PTHR43345:SF5">
    <property type="entry name" value="3-ISOPROPYLMALATE DEHYDRATASE SMALL SUBUNIT"/>
    <property type="match status" value="1"/>
</dbReference>
<dbReference type="PANTHER" id="PTHR43345">
    <property type="entry name" value="3-ISOPROPYLMALATE DEHYDRATASE SMALL SUBUNIT 2-RELATED-RELATED"/>
    <property type="match status" value="1"/>
</dbReference>
<dbReference type="Pfam" id="PF00694">
    <property type="entry name" value="Aconitase_C"/>
    <property type="match status" value="1"/>
</dbReference>
<dbReference type="SUPFAM" id="SSF52016">
    <property type="entry name" value="LeuD/IlvD-like"/>
    <property type="match status" value="1"/>
</dbReference>
<reference key="1">
    <citation type="submission" date="2007-02" db="EMBL/GenBank/DDBJ databases">
        <title>Complete sequence of chromosome of Yersinia pestis Pestoides F.</title>
        <authorList>
            <consortium name="US DOE Joint Genome Institute"/>
            <person name="Copeland A."/>
            <person name="Lucas S."/>
            <person name="Lapidus A."/>
            <person name="Barry K."/>
            <person name="Detter J.C."/>
            <person name="Glavina del Rio T."/>
            <person name="Hammon N."/>
            <person name="Israni S."/>
            <person name="Dalin E."/>
            <person name="Tice H."/>
            <person name="Pitluck S."/>
            <person name="Di Bartolo G."/>
            <person name="Chain P."/>
            <person name="Malfatti S."/>
            <person name="Shin M."/>
            <person name="Vergez L."/>
            <person name="Schmutz J."/>
            <person name="Larimer F."/>
            <person name="Land M."/>
            <person name="Hauser L."/>
            <person name="Worsham P."/>
            <person name="Chu M."/>
            <person name="Bearden S."/>
            <person name="Garcia E."/>
            <person name="Richardson P."/>
        </authorList>
    </citation>
    <scope>NUCLEOTIDE SEQUENCE [LARGE SCALE GENOMIC DNA]</scope>
    <source>
        <strain>Pestoides F</strain>
    </source>
</reference>
<proteinExistence type="inferred from homology"/>
<feature type="chain" id="PRO_1000063861" description="3-isopropylmalate dehydratase small subunit">
    <location>
        <begin position="1"/>
        <end position="200"/>
    </location>
</feature>
<name>LEUD_YERPP</name>
<comment type="function">
    <text evidence="1">Catalyzes the isomerization between 2-isopropylmalate and 3-isopropylmalate, via the formation of 2-isopropylmaleate.</text>
</comment>
<comment type="catalytic activity">
    <reaction evidence="1">
        <text>(2R,3S)-3-isopropylmalate = (2S)-2-isopropylmalate</text>
        <dbReference type="Rhea" id="RHEA:32287"/>
        <dbReference type="ChEBI" id="CHEBI:1178"/>
        <dbReference type="ChEBI" id="CHEBI:35121"/>
        <dbReference type="EC" id="4.2.1.33"/>
    </reaction>
</comment>
<comment type="pathway">
    <text evidence="1">Amino-acid biosynthesis; L-leucine biosynthesis; L-leucine from 3-methyl-2-oxobutanoate: step 2/4.</text>
</comment>
<comment type="subunit">
    <text evidence="1">Heterodimer of LeuC and LeuD.</text>
</comment>
<comment type="similarity">
    <text evidence="1">Belongs to the LeuD family. LeuD type 1 subfamily.</text>
</comment>
<accession>A4TQA5</accession>